<keyword id="KW-0169">Cobalamin biosynthesis</keyword>
<keyword id="KW-0489">Methyltransferase</keyword>
<keyword id="KW-1185">Reference proteome</keyword>
<keyword id="KW-0949">S-adenosyl-L-methionine</keyword>
<keyword id="KW-0808">Transferase</keyword>
<proteinExistence type="inferred from homology"/>
<sequence>MKLDLYIDKDGQKLRCGYTTGSCAAAAAKAAALILGGETMTSVKIDTPAGLVLDLPVEHCRSYKNKDGTAIGEAAVQKDAGDDPDSTDGIYIYARVSYRNDGKVLIDGGEGIGRITKKGLFGEVGEAAINPVPRQMIEKEVLKVSKKGFNVEIFSPQGAEIGKKTFNKNIGVEGGISIIGTKGIVYPMSEDAIKKTIYLEIDGILQNSEKKEILLVPGNYGEGLKEKLNTIIDLPTVKISNYIGDSLSYAYSKGFKTMTLLGHIGKFAKLSIGIFNTHNRTADTRMEAFVYYLAMHGADKKTIETVNAFLTAEEAFNYLVENKIEMILKAMERGAEERIKKYLKDDSLSIRVLIYSMKYGLIE</sequence>
<feature type="chain" id="PRO_0000141689" description="Cobalt-precorrin-5B C(1)-methyltransferase">
    <location>
        <begin position="1"/>
        <end position="363"/>
    </location>
</feature>
<gene>
    <name evidence="1" type="primary">cbiD</name>
    <name type="ordered locus">TDE_1595</name>
</gene>
<dbReference type="EC" id="2.1.1.195" evidence="1"/>
<dbReference type="EMBL" id="AE017226">
    <property type="protein sequence ID" value="AAS12112.1"/>
    <property type="molecule type" value="Genomic_DNA"/>
</dbReference>
<dbReference type="RefSeq" id="NP_972201.1">
    <property type="nucleotide sequence ID" value="NC_002967.9"/>
</dbReference>
<dbReference type="RefSeq" id="WP_002669153.1">
    <property type="nucleotide sequence ID" value="NC_002967.9"/>
</dbReference>
<dbReference type="SMR" id="P61987"/>
<dbReference type="STRING" id="243275.TDE_1595"/>
<dbReference type="DrugBank" id="DB09130">
    <property type="generic name" value="Copper"/>
</dbReference>
<dbReference type="PaxDb" id="243275-TDE_1595"/>
<dbReference type="GeneID" id="2739792"/>
<dbReference type="KEGG" id="tde:TDE_1595"/>
<dbReference type="PATRIC" id="fig|243275.7.peg.1525"/>
<dbReference type="eggNOG" id="COG1903">
    <property type="taxonomic scope" value="Bacteria"/>
</dbReference>
<dbReference type="HOGENOM" id="CLU_041273_1_0_12"/>
<dbReference type="OrthoDB" id="6439987at2"/>
<dbReference type="UniPathway" id="UPA00148">
    <property type="reaction ID" value="UER00227"/>
</dbReference>
<dbReference type="Proteomes" id="UP000008212">
    <property type="component" value="Chromosome"/>
</dbReference>
<dbReference type="GO" id="GO:0043780">
    <property type="term" value="F:cobalt-precorrin-5B C1-methyltransferase activity"/>
    <property type="evidence" value="ECO:0007669"/>
    <property type="project" value="RHEA"/>
</dbReference>
<dbReference type="GO" id="GO:0019251">
    <property type="term" value="P:anaerobic cobalamin biosynthetic process"/>
    <property type="evidence" value="ECO:0007669"/>
    <property type="project" value="UniProtKB-UniRule"/>
</dbReference>
<dbReference type="GO" id="GO:0032259">
    <property type="term" value="P:methylation"/>
    <property type="evidence" value="ECO:0007669"/>
    <property type="project" value="UniProtKB-KW"/>
</dbReference>
<dbReference type="Gene3D" id="3.30.2110.10">
    <property type="entry name" value="CbiD-like"/>
    <property type="match status" value="1"/>
</dbReference>
<dbReference type="HAMAP" id="MF_00787">
    <property type="entry name" value="CbiD"/>
    <property type="match status" value="1"/>
</dbReference>
<dbReference type="InterPro" id="IPR002748">
    <property type="entry name" value="CbiD"/>
</dbReference>
<dbReference type="InterPro" id="IPR036074">
    <property type="entry name" value="CbiD_sf"/>
</dbReference>
<dbReference type="NCBIfam" id="TIGR00312">
    <property type="entry name" value="cbiD"/>
    <property type="match status" value="1"/>
</dbReference>
<dbReference type="PANTHER" id="PTHR35863">
    <property type="entry name" value="COBALT-PRECORRIN-5B C(1)-METHYLTRANSFERASE"/>
    <property type="match status" value="1"/>
</dbReference>
<dbReference type="PANTHER" id="PTHR35863:SF1">
    <property type="entry name" value="COBALT-PRECORRIN-5B C(1)-METHYLTRANSFERASE"/>
    <property type="match status" value="1"/>
</dbReference>
<dbReference type="Pfam" id="PF01888">
    <property type="entry name" value="CbiD"/>
    <property type="match status" value="1"/>
</dbReference>
<dbReference type="PIRSF" id="PIRSF026782">
    <property type="entry name" value="CbiD"/>
    <property type="match status" value="1"/>
</dbReference>
<dbReference type="SUPFAM" id="SSF111342">
    <property type="entry name" value="CbiD-like"/>
    <property type="match status" value="1"/>
</dbReference>
<protein>
    <recommendedName>
        <fullName evidence="1">Cobalt-precorrin-5B C(1)-methyltransferase</fullName>
        <ecNumber evidence="1">2.1.1.195</ecNumber>
    </recommendedName>
    <alternativeName>
        <fullName evidence="1">Cobalt-precorrin-6A synthase</fullName>
    </alternativeName>
</protein>
<accession>P61987</accession>
<evidence type="ECO:0000255" key="1">
    <source>
        <dbReference type="HAMAP-Rule" id="MF_00787"/>
    </source>
</evidence>
<reference key="1">
    <citation type="journal article" date="2004" name="Proc. Natl. Acad. Sci. U.S.A.">
        <title>Comparison of the genome of the oral pathogen Treponema denticola with other spirochete genomes.</title>
        <authorList>
            <person name="Seshadri R."/>
            <person name="Myers G.S.A."/>
            <person name="Tettelin H."/>
            <person name="Eisen J.A."/>
            <person name="Heidelberg J.F."/>
            <person name="Dodson R.J."/>
            <person name="Davidsen T.M."/>
            <person name="DeBoy R.T."/>
            <person name="Fouts D.E."/>
            <person name="Haft D.H."/>
            <person name="Selengut J."/>
            <person name="Ren Q."/>
            <person name="Brinkac L.M."/>
            <person name="Madupu R."/>
            <person name="Kolonay J.F."/>
            <person name="Durkin S.A."/>
            <person name="Daugherty S.C."/>
            <person name="Shetty J."/>
            <person name="Shvartsbeyn A."/>
            <person name="Gebregeorgis E."/>
            <person name="Geer K."/>
            <person name="Tsegaye G."/>
            <person name="Malek J.A."/>
            <person name="Ayodeji B."/>
            <person name="Shatsman S."/>
            <person name="McLeod M.P."/>
            <person name="Smajs D."/>
            <person name="Howell J.K."/>
            <person name="Pal S."/>
            <person name="Amin A."/>
            <person name="Vashisth P."/>
            <person name="McNeill T.Z."/>
            <person name="Xiang Q."/>
            <person name="Sodergren E."/>
            <person name="Baca E."/>
            <person name="Weinstock G.M."/>
            <person name="Norris S.J."/>
            <person name="Fraser C.M."/>
            <person name="Paulsen I.T."/>
        </authorList>
    </citation>
    <scope>NUCLEOTIDE SEQUENCE [LARGE SCALE GENOMIC DNA]</scope>
    <source>
        <strain>ATCC 35405 / DSM 14222 / CIP 103919 / JCM 8153 / KCTC 15104</strain>
    </source>
</reference>
<comment type="function">
    <text evidence="1">Catalyzes the methylation of C-1 in cobalt-precorrin-5B to form cobalt-precorrin-6A.</text>
</comment>
<comment type="catalytic activity">
    <reaction evidence="1">
        <text>Co-precorrin-5B + S-adenosyl-L-methionine = Co-precorrin-6A + S-adenosyl-L-homocysteine</text>
        <dbReference type="Rhea" id="RHEA:26285"/>
        <dbReference type="ChEBI" id="CHEBI:57856"/>
        <dbReference type="ChEBI" id="CHEBI:59789"/>
        <dbReference type="ChEBI" id="CHEBI:60063"/>
        <dbReference type="ChEBI" id="CHEBI:60064"/>
        <dbReference type="EC" id="2.1.1.195"/>
    </reaction>
</comment>
<comment type="pathway">
    <text evidence="1">Cofactor biosynthesis; adenosylcobalamin biosynthesis; cob(II)yrinate a,c-diamide from sirohydrochlorin (anaerobic route): step 6/10.</text>
</comment>
<comment type="similarity">
    <text evidence="1">Belongs to the CbiD family.</text>
</comment>
<organism>
    <name type="scientific">Treponema denticola (strain ATCC 35405 / DSM 14222 / CIP 103919 / JCM 8153 / KCTC 15104)</name>
    <dbReference type="NCBI Taxonomy" id="243275"/>
    <lineage>
        <taxon>Bacteria</taxon>
        <taxon>Pseudomonadati</taxon>
        <taxon>Spirochaetota</taxon>
        <taxon>Spirochaetia</taxon>
        <taxon>Spirochaetales</taxon>
        <taxon>Treponemataceae</taxon>
        <taxon>Treponema</taxon>
    </lineage>
</organism>
<name>CBID_TREDE</name>